<reference key="1">
    <citation type="submission" date="2006-09" db="EMBL/GenBank/DDBJ databases">
        <title>Complete sequence of chromosome 1 of Shewanella sp. ANA-3.</title>
        <authorList>
            <person name="Copeland A."/>
            <person name="Lucas S."/>
            <person name="Lapidus A."/>
            <person name="Barry K."/>
            <person name="Detter J.C."/>
            <person name="Glavina del Rio T."/>
            <person name="Hammon N."/>
            <person name="Israni S."/>
            <person name="Dalin E."/>
            <person name="Tice H."/>
            <person name="Pitluck S."/>
            <person name="Chertkov O."/>
            <person name="Brettin T."/>
            <person name="Bruce D."/>
            <person name="Han C."/>
            <person name="Tapia R."/>
            <person name="Gilna P."/>
            <person name="Schmutz J."/>
            <person name="Larimer F."/>
            <person name="Land M."/>
            <person name="Hauser L."/>
            <person name="Kyrpides N."/>
            <person name="Kim E."/>
            <person name="Newman D."/>
            <person name="Salticov C."/>
            <person name="Konstantinidis K."/>
            <person name="Klappenback J."/>
            <person name="Tiedje J."/>
            <person name="Richardson P."/>
        </authorList>
    </citation>
    <scope>NUCLEOTIDE SEQUENCE [LARGE SCALE GENOMIC DNA]</scope>
    <source>
        <strain>ANA-3</strain>
    </source>
</reference>
<dbReference type="EC" id="6.1.1.6" evidence="1"/>
<dbReference type="EMBL" id="CP000469">
    <property type="protein sequence ID" value="ABK49520.1"/>
    <property type="molecule type" value="Genomic_DNA"/>
</dbReference>
<dbReference type="RefSeq" id="WP_011621622.1">
    <property type="nucleotide sequence ID" value="NC_008577.1"/>
</dbReference>
<dbReference type="SMR" id="A0L0F1"/>
<dbReference type="STRING" id="94122.Shewana3_3296"/>
<dbReference type="GeneID" id="94729223"/>
<dbReference type="KEGG" id="shn:Shewana3_3296"/>
<dbReference type="eggNOG" id="COG1190">
    <property type="taxonomic scope" value="Bacteria"/>
</dbReference>
<dbReference type="HOGENOM" id="CLU_008255_6_0_6"/>
<dbReference type="OrthoDB" id="9802326at2"/>
<dbReference type="Proteomes" id="UP000002589">
    <property type="component" value="Chromosome"/>
</dbReference>
<dbReference type="GO" id="GO:0005829">
    <property type="term" value="C:cytosol"/>
    <property type="evidence" value="ECO:0007669"/>
    <property type="project" value="TreeGrafter"/>
</dbReference>
<dbReference type="GO" id="GO:0005524">
    <property type="term" value="F:ATP binding"/>
    <property type="evidence" value="ECO:0007669"/>
    <property type="project" value="UniProtKB-UniRule"/>
</dbReference>
<dbReference type="GO" id="GO:0004824">
    <property type="term" value="F:lysine-tRNA ligase activity"/>
    <property type="evidence" value="ECO:0007669"/>
    <property type="project" value="UniProtKB-UniRule"/>
</dbReference>
<dbReference type="GO" id="GO:0000287">
    <property type="term" value="F:magnesium ion binding"/>
    <property type="evidence" value="ECO:0007669"/>
    <property type="project" value="UniProtKB-UniRule"/>
</dbReference>
<dbReference type="GO" id="GO:0000049">
    <property type="term" value="F:tRNA binding"/>
    <property type="evidence" value="ECO:0007669"/>
    <property type="project" value="TreeGrafter"/>
</dbReference>
<dbReference type="GO" id="GO:0006430">
    <property type="term" value="P:lysyl-tRNA aminoacylation"/>
    <property type="evidence" value="ECO:0007669"/>
    <property type="project" value="UniProtKB-UniRule"/>
</dbReference>
<dbReference type="CDD" id="cd00775">
    <property type="entry name" value="LysRS_core"/>
    <property type="match status" value="1"/>
</dbReference>
<dbReference type="CDD" id="cd04322">
    <property type="entry name" value="LysRS_N"/>
    <property type="match status" value="1"/>
</dbReference>
<dbReference type="FunFam" id="2.40.50.140:FF:000024">
    <property type="entry name" value="Lysine--tRNA ligase"/>
    <property type="match status" value="1"/>
</dbReference>
<dbReference type="FunFam" id="3.30.930.10:FF:000001">
    <property type="entry name" value="Lysine--tRNA ligase"/>
    <property type="match status" value="1"/>
</dbReference>
<dbReference type="Gene3D" id="3.30.930.10">
    <property type="entry name" value="Bira Bifunctional Protein, Domain 2"/>
    <property type="match status" value="1"/>
</dbReference>
<dbReference type="Gene3D" id="2.40.50.140">
    <property type="entry name" value="Nucleic acid-binding proteins"/>
    <property type="match status" value="1"/>
</dbReference>
<dbReference type="HAMAP" id="MF_00252">
    <property type="entry name" value="Lys_tRNA_synth_class2"/>
    <property type="match status" value="1"/>
</dbReference>
<dbReference type="InterPro" id="IPR004364">
    <property type="entry name" value="Aa-tRNA-synt_II"/>
</dbReference>
<dbReference type="InterPro" id="IPR006195">
    <property type="entry name" value="aa-tRNA-synth_II"/>
</dbReference>
<dbReference type="InterPro" id="IPR045864">
    <property type="entry name" value="aa-tRNA-synth_II/BPL/LPL"/>
</dbReference>
<dbReference type="InterPro" id="IPR002313">
    <property type="entry name" value="Lys-tRNA-ligase_II"/>
</dbReference>
<dbReference type="InterPro" id="IPR044136">
    <property type="entry name" value="Lys-tRNA-ligase_II_N"/>
</dbReference>
<dbReference type="InterPro" id="IPR018149">
    <property type="entry name" value="Lys-tRNA-synth_II_C"/>
</dbReference>
<dbReference type="InterPro" id="IPR012340">
    <property type="entry name" value="NA-bd_OB-fold"/>
</dbReference>
<dbReference type="InterPro" id="IPR004365">
    <property type="entry name" value="NA-bd_OB_tRNA"/>
</dbReference>
<dbReference type="NCBIfam" id="TIGR00499">
    <property type="entry name" value="lysS_bact"/>
    <property type="match status" value="1"/>
</dbReference>
<dbReference type="NCBIfam" id="NF001756">
    <property type="entry name" value="PRK00484.1"/>
    <property type="match status" value="1"/>
</dbReference>
<dbReference type="PANTHER" id="PTHR42918:SF15">
    <property type="entry name" value="LYSINE--TRNA LIGASE, CHLOROPLASTIC_MITOCHONDRIAL"/>
    <property type="match status" value="1"/>
</dbReference>
<dbReference type="PANTHER" id="PTHR42918">
    <property type="entry name" value="LYSYL-TRNA SYNTHETASE"/>
    <property type="match status" value="1"/>
</dbReference>
<dbReference type="Pfam" id="PF00152">
    <property type="entry name" value="tRNA-synt_2"/>
    <property type="match status" value="1"/>
</dbReference>
<dbReference type="Pfam" id="PF01336">
    <property type="entry name" value="tRNA_anti-codon"/>
    <property type="match status" value="1"/>
</dbReference>
<dbReference type="PRINTS" id="PR00982">
    <property type="entry name" value="TRNASYNTHLYS"/>
</dbReference>
<dbReference type="SUPFAM" id="SSF55681">
    <property type="entry name" value="Class II aaRS and biotin synthetases"/>
    <property type="match status" value="1"/>
</dbReference>
<dbReference type="SUPFAM" id="SSF50249">
    <property type="entry name" value="Nucleic acid-binding proteins"/>
    <property type="match status" value="1"/>
</dbReference>
<dbReference type="PROSITE" id="PS50862">
    <property type="entry name" value="AA_TRNA_LIGASE_II"/>
    <property type="match status" value="1"/>
</dbReference>
<evidence type="ECO:0000255" key="1">
    <source>
        <dbReference type="HAMAP-Rule" id="MF_00252"/>
    </source>
</evidence>
<gene>
    <name evidence="1" type="primary">lysS</name>
    <name type="ordered locus">Shewana3_3296</name>
</gene>
<protein>
    <recommendedName>
        <fullName evidence="1">Lysine--tRNA ligase</fullName>
        <ecNumber evidence="1">6.1.1.6</ecNumber>
    </recommendedName>
    <alternativeName>
        <fullName evidence="1">Lysyl-tRNA synthetase</fullName>
        <shortName evidence="1">LysRS</shortName>
    </alternativeName>
</protein>
<comment type="catalytic activity">
    <reaction evidence="1">
        <text>tRNA(Lys) + L-lysine + ATP = L-lysyl-tRNA(Lys) + AMP + diphosphate</text>
        <dbReference type="Rhea" id="RHEA:20792"/>
        <dbReference type="Rhea" id="RHEA-COMP:9696"/>
        <dbReference type="Rhea" id="RHEA-COMP:9697"/>
        <dbReference type="ChEBI" id="CHEBI:30616"/>
        <dbReference type="ChEBI" id="CHEBI:32551"/>
        <dbReference type="ChEBI" id="CHEBI:33019"/>
        <dbReference type="ChEBI" id="CHEBI:78442"/>
        <dbReference type="ChEBI" id="CHEBI:78529"/>
        <dbReference type="ChEBI" id="CHEBI:456215"/>
        <dbReference type="EC" id="6.1.1.6"/>
    </reaction>
</comment>
<comment type="cofactor">
    <cofactor evidence="1">
        <name>Mg(2+)</name>
        <dbReference type="ChEBI" id="CHEBI:18420"/>
    </cofactor>
    <text evidence="1">Binds 3 Mg(2+) ions per subunit.</text>
</comment>
<comment type="subunit">
    <text evidence="1">Homodimer.</text>
</comment>
<comment type="subcellular location">
    <subcellularLocation>
        <location evidence="1">Cytoplasm</location>
    </subcellularLocation>
</comment>
<comment type="similarity">
    <text evidence="1">Belongs to the class-II aminoacyl-tRNA synthetase family.</text>
</comment>
<proteinExistence type="inferred from homology"/>
<organism>
    <name type="scientific">Shewanella sp. (strain ANA-3)</name>
    <dbReference type="NCBI Taxonomy" id="94122"/>
    <lineage>
        <taxon>Bacteria</taxon>
        <taxon>Pseudomonadati</taxon>
        <taxon>Pseudomonadota</taxon>
        <taxon>Gammaproteobacteria</taxon>
        <taxon>Alteromonadales</taxon>
        <taxon>Shewanellaceae</taxon>
        <taxon>Shewanella</taxon>
    </lineage>
</organism>
<keyword id="KW-0030">Aminoacyl-tRNA synthetase</keyword>
<keyword id="KW-0067">ATP-binding</keyword>
<keyword id="KW-0963">Cytoplasm</keyword>
<keyword id="KW-0436">Ligase</keyword>
<keyword id="KW-0460">Magnesium</keyword>
<keyword id="KW-0479">Metal-binding</keyword>
<keyword id="KW-0547">Nucleotide-binding</keyword>
<keyword id="KW-0648">Protein biosynthesis</keyword>
<accession>A0L0F1</accession>
<name>SYK_SHESA</name>
<feature type="chain" id="PRO_1000012931" description="Lysine--tRNA ligase">
    <location>
        <begin position="1"/>
        <end position="500"/>
    </location>
</feature>
<feature type="binding site" evidence="1">
    <location>
        <position position="410"/>
    </location>
    <ligand>
        <name>Mg(2+)</name>
        <dbReference type="ChEBI" id="CHEBI:18420"/>
        <label>1</label>
    </ligand>
</feature>
<feature type="binding site" evidence="1">
    <location>
        <position position="417"/>
    </location>
    <ligand>
        <name>Mg(2+)</name>
        <dbReference type="ChEBI" id="CHEBI:18420"/>
        <label>1</label>
    </ligand>
</feature>
<feature type="binding site" evidence="1">
    <location>
        <position position="417"/>
    </location>
    <ligand>
        <name>Mg(2+)</name>
        <dbReference type="ChEBI" id="CHEBI:18420"/>
        <label>2</label>
    </ligand>
</feature>
<sequence>MTEQVQDENKLIAERRAKLESIRPNCSANAHPNTFRRTHKAAELQEKYGQNTKEELEALGFKTSIAGRIMAKRGPFLVIQDVSGRIQAYAEKGVQADLKDRYQGLDIGDIIGVTGQLHLSGKGDLYVNMEEYQLLTKALRPLPEKFHGLTDQETRYRQRYVDLIVNEESRQAFVMRSKVVAAIRNFMIKKEFMEVETPMMHVIPGGASARPFITHHNALDMPMYLRIAPELYLKRLVVGGFERVFEINRNFRNEGLSPRHNPEFTMMEFYMAYADYKDLMDLTEELLSSIAIELLGSAQMPYGEHTVDFGGPYARLSMLEAIQKYNPDNATIQAMTYEQVKDLEFMRELAISLGIKIEKFWTCGQLLEEIFGETAEWQLMQPTFITGYPADISPLARRNDDNHFITDRFEFFIGGREVANGFSELNDAEDQDSRFKAQVDAKDAGDDEAMFYDADYITALEHGLPPTAGQGIGIDRLVMLFTNTHTIRDVILFPAMRPQA</sequence>